<sequence length="213" mass="23179">MERIKLAEKIISTCREMNASGLNQGTSGNVSARYTGGMLITPSGIAYSKMTPDMIVFVDDKGKPEAGKIPSSEWLIHLACYKARPELNAVIHTHAVNSTAVAIHNHSIPAIHYMVAVSGTDHIPCIPYYTFGSPELADGVSKGIRESKSLLMQHHGMLAMDVTLEKTLWLAGETETLADLYIKCGGLHHDVPVLSEAEMTIVLEKFKTYGLKA</sequence>
<reference key="1">
    <citation type="journal article" date="2009" name="PLoS Genet.">
        <title>Organised genome dynamics in the Escherichia coli species results in highly diverse adaptive paths.</title>
        <authorList>
            <person name="Touchon M."/>
            <person name="Hoede C."/>
            <person name="Tenaillon O."/>
            <person name="Barbe V."/>
            <person name="Baeriswyl S."/>
            <person name="Bidet P."/>
            <person name="Bingen E."/>
            <person name="Bonacorsi S."/>
            <person name="Bouchier C."/>
            <person name="Bouvet O."/>
            <person name="Calteau A."/>
            <person name="Chiapello H."/>
            <person name="Clermont O."/>
            <person name="Cruveiller S."/>
            <person name="Danchin A."/>
            <person name="Diard M."/>
            <person name="Dossat C."/>
            <person name="Karoui M.E."/>
            <person name="Frapy E."/>
            <person name="Garry L."/>
            <person name="Ghigo J.M."/>
            <person name="Gilles A.M."/>
            <person name="Johnson J."/>
            <person name="Le Bouguenec C."/>
            <person name="Lescat M."/>
            <person name="Mangenot S."/>
            <person name="Martinez-Jehanne V."/>
            <person name="Matic I."/>
            <person name="Nassif X."/>
            <person name="Oztas S."/>
            <person name="Petit M.A."/>
            <person name="Pichon C."/>
            <person name="Rouy Z."/>
            <person name="Ruf C.S."/>
            <person name="Schneider D."/>
            <person name="Tourret J."/>
            <person name="Vacherie B."/>
            <person name="Vallenet D."/>
            <person name="Medigue C."/>
            <person name="Rocha E.P.C."/>
            <person name="Denamur E."/>
        </authorList>
    </citation>
    <scope>NUCLEOTIDE SEQUENCE [LARGE SCALE GENOMIC DNA]</scope>
    <source>
        <strain>S88 / ExPEC</strain>
    </source>
</reference>
<reference key="2">
    <citation type="journal article" date="2020" name="Mol. Microbiol.">
        <title>A bifunctional salvage pathway for two distinct S-adenosylmethionine by-products that is widespread in bacteria, including pathogenic Escherichia coli.</title>
        <authorList>
            <person name="North J.A."/>
            <person name="Wildenthal J.A."/>
            <person name="Erb T.J."/>
            <person name="Evans B.S."/>
            <person name="Byerly K.M."/>
            <person name="Gerlt J.A."/>
            <person name="Tabita F.R."/>
        </authorList>
    </citation>
    <scope>FUNCTION</scope>
    <scope>CATALYTIC ACTIVITY</scope>
    <scope>COFACTOR</scope>
    <scope>BIOPHYSICOCHEMICAL PROPERTIES</scope>
    <scope>PATHWAY</scope>
    <scope>DISRUPTION PHENOTYPE</scope>
    <source>
        <strain>ATCC 25922 / DSM 1103 / NCIB 12210 / ExPEC</strain>
    </source>
</reference>
<dbReference type="EC" id="4.1.2.62" evidence="2"/>
<dbReference type="EMBL" id="CU928161">
    <property type="protein sequence ID" value="CAR06049.1"/>
    <property type="molecule type" value="Genomic_DNA"/>
</dbReference>
<dbReference type="RefSeq" id="WP_000439687.1">
    <property type="nucleotide sequence ID" value="NC_011742.1"/>
</dbReference>
<dbReference type="SMR" id="B7MMH7"/>
<dbReference type="KEGG" id="ecz:ECS88_4903"/>
<dbReference type="HOGENOM" id="CLU_006033_3_0_6"/>
<dbReference type="UniPathway" id="UPA00904"/>
<dbReference type="Proteomes" id="UP000000747">
    <property type="component" value="Chromosome"/>
</dbReference>
<dbReference type="GO" id="GO:0005829">
    <property type="term" value="C:cytosol"/>
    <property type="evidence" value="ECO:0007669"/>
    <property type="project" value="TreeGrafter"/>
</dbReference>
<dbReference type="GO" id="GO:0016832">
    <property type="term" value="F:aldehyde-lyase activity"/>
    <property type="evidence" value="ECO:0007669"/>
    <property type="project" value="TreeGrafter"/>
</dbReference>
<dbReference type="GO" id="GO:0046872">
    <property type="term" value="F:metal ion binding"/>
    <property type="evidence" value="ECO:0007669"/>
    <property type="project" value="UniProtKB-KW"/>
</dbReference>
<dbReference type="GO" id="GO:0019509">
    <property type="term" value="P:L-methionine salvage from methylthioadenosine"/>
    <property type="evidence" value="ECO:0007669"/>
    <property type="project" value="UniProtKB-UniPathway"/>
</dbReference>
<dbReference type="GO" id="GO:0019323">
    <property type="term" value="P:pentose catabolic process"/>
    <property type="evidence" value="ECO:0007669"/>
    <property type="project" value="TreeGrafter"/>
</dbReference>
<dbReference type="Gene3D" id="3.40.225.10">
    <property type="entry name" value="Class II aldolase/adducin N-terminal domain"/>
    <property type="match status" value="1"/>
</dbReference>
<dbReference type="InterPro" id="IPR050197">
    <property type="entry name" value="Aldolase_class_II_sugar_metab"/>
</dbReference>
<dbReference type="InterPro" id="IPR001303">
    <property type="entry name" value="Aldolase_II/adducin_N"/>
</dbReference>
<dbReference type="InterPro" id="IPR036409">
    <property type="entry name" value="Aldolase_II/adducin_N_sf"/>
</dbReference>
<dbReference type="NCBIfam" id="NF005984">
    <property type="entry name" value="PRK08087.1"/>
    <property type="match status" value="1"/>
</dbReference>
<dbReference type="PANTHER" id="PTHR22789:SF0">
    <property type="entry name" value="3-OXO-TETRONATE 4-PHOSPHATE DECARBOXYLASE-RELATED"/>
    <property type="match status" value="1"/>
</dbReference>
<dbReference type="PANTHER" id="PTHR22789">
    <property type="entry name" value="FUCULOSE PHOSPHATE ALDOLASE"/>
    <property type="match status" value="1"/>
</dbReference>
<dbReference type="Pfam" id="PF00596">
    <property type="entry name" value="Aldolase_II"/>
    <property type="match status" value="1"/>
</dbReference>
<dbReference type="SMART" id="SM01007">
    <property type="entry name" value="Aldolase_II"/>
    <property type="match status" value="1"/>
</dbReference>
<dbReference type="SUPFAM" id="SSF53639">
    <property type="entry name" value="AraD/HMP-PK domain-like"/>
    <property type="match status" value="1"/>
</dbReference>
<proteinExistence type="evidence at protein level"/>
<comment type="function">
    <text evidence="2">Uses 5-methylthioribulose-1-phosphate to yield 2-(methylthio)acetaldehyde and dihydroxyacetone phosphate. Can also use 5-deoxyribulose 1-phosphate to yield acetaldehyde and dihydroxyacetone phosphate. Part of a bifunctional DHAP-shunt salvage pathway for SAM by-products.</text>
</comment>
<comment type="catalytic activity">
    <reaction evidence="2">
        <text>5-(methylsulfanyl)-D-ribulose 1-phosphate = 2-(methylsulfanyl)acetaldehyde + dihydroxyacetone phosphate</text>
        <dbReference type="Rhea" id="RHEA:56940"/>
        <dbReference type="ChEBI" id="CHEBI:57642"/>
        <dbReference type="ChEBI" id="CHEBI:58548"/>
        <dbReference type="ChEBI" id="CHEBI:141184"/>
        <dbReference type="EC" id="4.1.2.62"/>
    </reaction>
    <physiologicalReaction direction="left-to-right" evidence="2">
        <dbReference type="Rhea" id="RHEA:56941"/>
    </physiologicalReaction>
</comment>
<comment type="catalytic activity">
    <reaction evidence="2">
        <text>5-deoxy-D-ribulose 1-phosphate = dihydroxyacetone phosphate + acetaldehyde</text>
        <dbReference type="Rhea" id="RHEA:61300"/>
        <dbReference type="ChEBI" id="CHEBI:15343"/>
        <dbReference type="ChEBI" id="CHEBI:57642"/>
        <dbReference type="ChEBI" id="CHEBI:144504"/>
        <dbReference type="EC" id="4.1.2.62"/>
    </reaction>
    <physiologicalReaction direction="left-to-right" evidence="2">
        <dbReference type="Rhea" id="RHEA:61301"/>
    </physiologicalReaction>
</comment>
<comment type="cofactor">
    <cofactor evidence="2">
        <name>Co(2+)</name>
        <dbReference type="ChEBI" id="CHEBI:48828"/>
    </cofactor>
    <text evidence="1 2">Binds 1 cobalt ion per subunit (By similarity). Can also use Mn(2+) (PubMed:31950558).</text>
</comment>
<comment type="biophysicochemical properties">
    <kinetics>
        <KM evidence="2">275 uM for 5-methylthioribulose-1-phosphate</KM>
        <KM evidence="2">598 uM for 5-deoxyribulose 1-phosphate</KM>
        <KM evidence="2">827 uM for ribulose-1-phosphate</KM>
        <text evidence="2">kcat is 22 sec(-1) with 5-methylthioribulose-1-phosphate as substrate. kcat is 22 sec(-1) with 5-deoxyribulose 1-phosphate as substrate. kcat is 8.7 sec(-1) with ribulose-1-phosphate as substrate.</text>
    </kinetics>
</comment>
<comment type="pathway">
    <text evidence="5">Amino-acid biosynthesis; L-methionine biosynthesis via salvage pathway.</text>
</comment>
<comment type="disruption phenotype">
    <text evidence="2">Inactivation of the gene precludes growth of the strain with 5-deoxyribose.</text>
</comment>
<comment type="similarity">
    <text evidence="4">Belongs to the aldolase class II family.</text>
</comment>
<organism>
    <name type="scientific">Escherichia coli O45:K1 (strain S88 / ExPEC)</name>
    <dbReference type="NCBI Taxonomy" id="585035"/>
    <lineage>
        <taxon>Bacteria</taxon>
        <taxon>Pseudomonadati</taxon>
        <taxon>Pseudomonadota</taxon>
        <taxon>Gammaproteobacteria</taxon>
        <taxon>Enterobacterales</taxon>
        <taxon>Enterobacteriaceae</taxon>
        <taxon>Escherichia</taxon>
    </lineage>
</organism>
<evidence type="ECO:0000250" key="1">
    <source>
        <dbReference type="UniProtKB" id="P0AB87"/>
    </source>
</evidence>
<evidence type="ECO:0000269" key="2">
    <source>
    </source>
</evidence>
<evidence type="ECO:0000303" key="3">
    <source>
    </source>
</evidence>
<evidence type="ECO:0000305" key="4"/>
<evidence type="ECO:0000305" key="5">
    <source>
    </source>
</evidence>
<evidence type="ECO:0000312" key="6">
    <source>
        <dbReference type="EMBL" id="CAR06049.1"/>
    </source>
</evidence>
<name>ALD2_ECO45</name>
<accession>B7MMH7</accession>
<gene>
    <name evidence="3" type="primary">ald2</name>
    <name evidence="6" type="ordered locus">ECS88_4903</name>
</gene>
<keyword id="KW-0028">Amino-acid biosynthesis</keyword>
<keyword id="KW-0170">Cobalt</keyword>
<keyword id="KW-0456">Lyase</keyword>
<keyword id="KW-0479">Metal-binding</keyword>
<keyword id="KW-0486">Methionine biosynthesis</keyword>
<keyword id="KW-1185">Reference proteome</keyword>
<feature type="chain" id="PRO_0000450354" description="5-methylthioribulose-1-phosphate/5-deoxyribulose-1-phosphate aldolase">
    <location>
        <begin position="1"/>
        <end position="213"/>
    </location>
</feature>
<feature type="active site" description="Proton donor/acceptor" evidence="1">
    <location>
        <position position="73"/>
    </location>
</feature>
<feature type="binding site" evidence="1">
    <location>
        <position position="73"/>
    </location>
    <ligand>
        <name>Co(2+)</name>
        <dbReference type="ChEBI" id="CHEBI:48828"/>
        <note>catalytic</note>
    </ligand>
</feature>
<feature type="binding site" evidence="1">
    <location>
        <position position="92"/>
    </location>
    <ligand>
        <name>Co(2+)</name>
        <dbReference type="ChEBI" id="CHEBI:48828"/>
        <note>catalytic</note>
    </ligand>
</feature>
<feature type="binding site" evidence="1">
    <location>
        <position position="94"/>
    </location>
    <ligand>
        <name>Co(2+)</name>
        <dbReference type="ChEBI" id="CHEBI:48828"/>
        <note>catalytic</note>
    </ligand>
</feature>
<feature type="binding site" evidence="1">
    <location>
        <position position="155"/>
    </location>
    <ligand>
        <name>Co(2+)</name>
        <dbReference type="ChEBI" id="CHEBI:48828"/>
        <note>catalytic</note>
    </ligand>
</feature>
<feature type="site" description="Plays a key role in the stabilization of the transition state and positioning the aldehyde component" evidence="1">
    <location>
        <position position="113"/>
    </location>
</feature>
<feature type="site" description="Plays a key role in the stabilization of the transition state and positioning the aldehyde component" evidence="1">
    <location>
        <position position="131"/>
    </location>
</feature>
<feature type="site" description="Plays a key role in the stabilization of the transition state and positioning the aldehyde component" evidence="1">
    <location>
        <position position="209"/>
    </location>
</feature>
<protein>
    <recommendedName>
        <fullName evidence="3">5-methylthioribulose-1-phosphate/5-deoxyribulose-1-phosphate aldolase</fullName>
        <ecNumber evidence="2">4.1.2.62</ecNumber>
    </recommendedName>
</protein>